<sequence>MKAVTLLGSTGSIGTQTLDILEQYPDRFRLVGLAAGRNVALLSEQIRRHRPEIVAIQDAAQLSELQAAIADLDNPPLILTGEAGVTEVARYGDAEIVVTGIVGCAGLLPTIAAIEAGKDIALANKETLIAAGPVVLPLLQKHGVTITPADSEHSAIFQCIQGLSTHADFRPAQVVAGLRRILLTASGGAFRDWPVERLSQVTVADALKHPNWSMGRKITVDSATLMNKGLEVIEAHYLFGLDYDYIDIVIHPQSIIHSLIELEDTSVLAQLGWPDMRLPLLYALSWPDRLSTQWSALDLVKAGSLEFREPDHAKYPCMDLAYAAGRKGGTMPAVLNAANEQAVALFLEEQIHFSDIPRLIERACDRHQTEWQQQPSLDDILAYDAWARQFVQASYQSLESVV</sequence>
<feature type="chain" id="PRO_0000163718" description="1-deoxy-D-xylulose 5-phosphate reductoisomerase">
    <location>
        <begin position="1"/>
        <end position="402"/>
    </location>
</feature>
<feature type="binding site" evidence="1">
    <location>
        <position position="10"/>
    </location>
    <ligand>
        <name>NADPH</name>
        <dbReference type="ChEBI" id="CHEBI:57783"/>
    </ligand>
</feature>
<feature type="binding site" evidence="1">
    <location>
        <position position="11"/>
    </location>
    <ligand>
        <name>NADPH</name>
        <dbReference type="ChEBI" id="CHEBI:57783"/>
    </ligand>
</feature>
<feature type="binding site" evidence="1">
    <location>
        <position position="12"/>
    </location>
    <ligand>
        <name>NADPH</name>
        <dbReference type="ChEBI" id="CHEBI:57783"/>
    </ligand>
</feature>
<feature type="binding site" evidence="1">
    <location>
        <position position="13"/>
    </location>
    <ligand>
        <name>NADPH</name>
        <dbReference type="ChEBI" id="CHEBI:57783"/>
    </ligand>
</feature>
<feature type="binding site" evidence="1">
    <location>
        <position position="36"/>
    </location>
    <ligand>
        <name>NADPH</name>
        <dbReference type="ChEBI" id="CHEBI:57783"/>
    </ligand>
</feature>
<feature type="binding site" evidence="1">
    <location>
        <position position="37"/>
    </location>
    <ligand>
        <name>NADPH</name>
        <dbReference type="ChEBI" id="CHEBI:57783"/>
    </ligand>
</feature>
<feature type="binding site" evidence="1">
    <location>
        <position position="38"/>
    </location>
    <ligand>
        <name>NADPH</name>
        <dbReference type="ChEBI" id="CHEBI:57783"/>
    </ligand>
</feature>
<feature type="binding site" evidence="1">
    <location>
        <position position="124"/>
    </location>
    <ligand>
        <name>NADPH</name>
        <dbReference type="ChEBI" id="CHEBI:57783"/>
    </ligand>
</feature>
<feature type="binding site" evidence="1">
    <location>
        <position position="125"/>
    </location>
    <ligand>
        <name>1-deoxy-D-xylulose 5-phosphate</name>
        <dbReference type="ChEBI" id="CHEBI:57792"/>
    </ligand>
</feature>
<feature type="binding site" evidence="1">
    <location>
        <position position="126"/>
    </location>
    <ligand>
        <name>NADPH</name>
        <dbReference type="ChEBI" id="CHEBI:57783"/>
    </ligand>
</feature>
<feature type="binding site" evidence="1">
    <location>
        <position position="150"/>
    </location>
    <ligand>
        <name>Mn(2+)</name>
        <dbReference type="ChEBI" id="CHEBI:29035"/>
    </ligand>
</feature>
<feature type="binding site" evidence="1">
    <location>
        <position position="151"/>
    </location>
    <ligand>
        <name>1-deoxy-D-xylulose 5-phosphate</name>
        <dbReference type="ChEBI" id="CHEBI:57792"/>
    </ligand>
</feature>
<feature type="binding site" evidence="1">
    <location>
        <position position="152"/>
    </location>
    <ligand>
        <name>1-deoxy-D-xylulose 5-phosphate</name>
        <dbReference type="ChEBI" id="CHEBI:57792"/>
    </ligand>
</feature>
<feature type="binding site" evidence="1">
    <location>
        <position position="152"/>
    </location>
    <ligand>
        <name>Mn(2+)</name>
        <dbReference type="ChEBI" id="CHEBI:29035"/>
    </ligand>
</feature>
<feature type="binding site" evidence="1">
    <location>
        <position position="186"/>
    </location>
    <ligand>
        <name>1-deoxy-D-xylulose 5-phosphate</name>
        <dbReference type="ChEBI" id="CHEBI:57792"/>
    </ligand>
</feature>
<feature type="binding site" evidence="1">
    <location>
        <position position="209"/>
    </location>
    <ligand>
        <name>1-deoxy-D-xylulose 5-phosphate</name>
        <dbReference type="ChEBI" id="CHEBI:57792"/>
    </ligand>
</feature>
<feature type="binding site" evidence="1">
    <location>
        <position position="215"/>
    </location>
    <ligand>
        <name>NADPH</name>
        <dbReference type="ChEBI" id="CHEBI:57783"/>
    </ligand>
</feature>
<feature type="binding site" evidence="1">
    <location>
        <position position="222"/>
    </location>
    <ligand>
        <name>1-deoxy-D-xylulose 5-phosphate</name>
        <dbReference type="ChEBI" id="CHEBI:57792"/>
    </ligand>
</feature>
<feature type="binding site" evidence="1">
    <location>
        <position position="227"/>
    </location>
    <ligand>
        <name>1-deoxy-D-xylulose 5-phosphate</name>
        <dbReference type="ChEBI" id="CHEBI:57792"/>
    </ligand>
</feature>
<feature type="binding site" evidence="1">
    <location>
        <position position="228"/>
    </location>
    <ligand>
        <name>1-deoxy-D-xylulose 5-phosphate</name>
        <dbReference type="ChEBI" id="CHEBI:57792"/>
    </ligand>
</feature>
<feature type="binding site" evidence="1">
    <location>
        <position position="231"/>
    </location>
    <ligand>
        <name>1-deoxy-D-xylulose 5-phosphate</name>
        <dbReference type="ChEBI" id="CHEBI:57792"/>
    </ligand>
</feature>
<feature type="binding site" evidence="1">
    <location>
        <position position="231"/>
    </location>
    <ligand>
        <name>Mn(2+)</name>
        <dbReference type="ChEBI" id="CHEBI:29035"/>
    </ligand>
</feature>
<gene>
    <name evidence="1" type="primary">dxr</name>
    <name type="ordered locus">syc2498_d</name>
</gene>
<proteinExistence type="evidence at protein level"/>
<name>DXR_SYNP6</name>
<dbReference type="EC" id="1.1.1.267" evidence="2"/>
<dbReference type="EMBL" id="AJ250721">
    <property type="protein sequence ID" value="CAB65435.1"/>
    <property type="molecule type" value="Genomic_DNA"/>
</dbReference>
<dbReference type="EMBL" id="AP008231">
    <property type="protein sequence ID" value="BAD80688.1"/>
    <property type="molecule type" value="Genomic_DNA"/>
</dbReference>
<dbReference type="RefSeq" id="WP_011244808.1">
    <property type="nucleotide sequence ID" value="NZ_CP085785.1"/>
</dbReference>
<dbReference type="SMR" id="Q9RCT1"/>
<dbReference type="KEGG" id="syc:syc2498_d"/>
<dbReference type="eggNOG" id="COG0743">
    <property type="taxonomic scope" value="Bacteria"/>
</dbReference>
<dbReference type="UniPathway" id="UPA00056">
    <property type="reaction ID" value="UER00092"/>
</dbReference>
<dbReference type="Proteomes" id="UP000001175">
    <property type="component" value="Chromosome"/>
</dbReference>
<dbReference type="GO" id="GO:0030604">
    <property type="term" value="F:1-deoxy-D-xylulose-5-phosphate reductoisomerase activity"/>
    <property type="evidence" value="ECO:0007669"/>
    <property type="project" value="UniProtKB-UniRule"/>
</dbReference>
<dbReference type="GO" id="GO:0030145">
    <property type="term" value="F:manganese ion binding"/>
    <property type="evidence" value="ECO:0007669"/>
    <property type="project" value="TreeGrafter"/>
</dbReference>
<dbReference type="GO" id="GO:0070402">
    <property type="term" value="F:NADPH binding"/>
    <property type="evidence" value="ECO:0007669"/>
    <property type="project" value="InterPro"/>
</dbReference>
<dbReference type="GO" id="GO:0051484">
    <property type="term" value="P:isopentenyl diphosphate biosynthetic process, methylerythritol 4-phosphate pathway involved in terpenoid biosynthetic process"/>
    <property type="evidence" value="ECO:0007669"/>
    <property type="project" value="TreeGrafter"/>
</dbReference>
<dbReference type="FunFam" id="3.40.50.720:FF:000183">
    <property type="entry name" value="1-deoxy-D-xylulose 5-phosphate reductoisomerase, chloroplastic"/>
    <property type="match status" value="1"/>
</dbReference>
<dbReference type="Gene3D" id="1.10.1740.10">
    <property type="match status" value="1"/>
</dbReference>
<dbReference type="Gene3D" id="3.40.50.720">
    <property type="entry name" value="NAD(P)-binding Rossmann-like Domain"/>
    <property type="match status" value="1"/>
</dbReference>
<dbReference type="HAMAP" id="MF_00183">
    <property type="entry name" value="DXP_reductoisom"/>
    <property type="match status" value="1"/>
</dbReference>
<dbReference type="InterPro" id="IPR003821">
    <property type="entry name" value="DXP_reductoisomerase"/>
</dbReference>
<dbReference type="InterPro" id="IPR013644">
    <property type="entry name" value="DXP_reductoisomerase_C"/>
</dbReference>
<dbReference type="InterPro" id="IPR013512">
    <property type="entry name" value="DXP_reductoisomerase_N"/>
</dbReference>
<dbReference type="InterPro" id="IPR026877">
    <property type="entry name" value="DXPR_C"/>
</dbReference>
<dbReference type="InterPro" id="IPR036169">
    <property type="entry name" value="DXPR_C_sf"/>
</dbReference>
<dbReference type="InterPro" id="IPR036291">
    <property type="entry name" value="NAD(P)-bd_dom_sf"/>
</dbReference>
<dbReference type="NCBIfam" id="TIGR00243">
    <property type="entry name" value="Dxr"/>
    <property type="match status" value="1"/>
</dbReference>
<dbReference type="NCBIfam" id="NF009114">
    <property type="entry name" value="PRK12464.1"/>
    <property type="match status" value="1"/>
</dbReference>
<dbReference type="PANTHER" id="PTHR30525">
    <property type="entry name" value="1-DEOXY-D-XYLULOSE 5-PHOSPHATE REDUCTOISOMERASE"/>
    <property type="match status" value="1"/>
</dbReference>
<dbReference type="PANTHER" id="PTHR30525:SF0">
    <property type="entry name" value="1-DEOXY-D-XYLULOSE 5-PHOSPHATE REDUCTOISOMERASE, CHLOROPLASTIC"/>
    <property type="match status" value="1"/>
</dbReference>
<dbReference type="Pfam" id="PF08436">
    <property type="entry name" value="DXP_redisom_C"/>
    <property type="match status" value="1"/>
</dbReference>
<dbReference type="Pfam" id="PF02670">
    <property type="entry name" value="DXP_reductoisom"/>
    <property type="match status" value="1"/>
</dbReference>
<dbReference type="Pfam" id="PF13288">
    <property type="entry name" value="DXPR_C"/>
    <property type="match status" value="1"/>
</dbReference>
<dbReference type="PIRSF" id="PIRSF006205">
    <property type="entry name" value="Dxp_reductismrs"/>
    <property type="match status" value="1"/>
</dbReference>
<dbReference type="SUPFAM" id="SSF69055">
    <property type="entry name" value="1-deoxy-D-xylulose-5-phosphate reductoisomerase, C-terminal domain"/>
    <property type="match status" value="1"/>
</dbReference>
<dbReference type="SUPFAM" id="SSF55347">
    <property type="entry name" value="Glyceraldehyde-3-phosphate dehydrogenase-like, C-terminal domain"/>
    <property type="match status" value="1"/>
</dbReference>
<dbReference type="SUPFAM" id="SSF51735">
    <property type="entry name" value="NAD(P)-binding Rossmann-fold domains"/>
    <property type="match status" value="1"/>
</dbReference>
<organism>
    <name type="scientific">Synechococcus sp. (strain ATCC 27144 / PCC 6301 / SAUG 1402/1)</name>
    <name type="common">Anacystis nidulans</name>
    <dbReference type="NCBI Taxonomy" id="269084"/>
    <lineage>
        <taxon>Bacteria</taxon>
        <taxon>Bacillati</taxon>
        <taxon>Cyanobacteriota</taxon>
        <taxon>Cyanophyceae</taxon>
        <taxon>Synechococcales</taxon>
        <taxon>Synechococcaceae</taxon>
        <taxon>Synechococcus</taxon>
    </lineage>
</organism>
<accession>Q9RCT1</accession>
<accession>Q5MZ32</accession>
<comment type="function">
    <text evidence="2">Catalyzes the NADPH-dependent rearrangement and reduction of 1-deoxy-D-xylulose-5-phosphate (DXP) to 2-C-methyl-D-erythritol 4-phosphate (MEP).</text>
</comment>
<comment type="catalytic activity">
    <reaction evidence="2">
        <text>2-C-methyl-D-erythritol 4-phosphate + NADP(+) = 1-deoxy-D-xylulose 5-phosphate + NADPH + H(+)</text>
        <dbReference type="Rhea" id="RHEA:13717"/>
        <dbReference type="ChEBI" id="CHEBI:15378"/>
        <dbReference type="ChEBI" id="CHEBI:57783"/>
        <dbReference type="ChEBI" id="CHEBI:57792"/>
        <dbReference type="ChEBI" id="CHEBI:58262"/>
        <dbReference type="ChEBI" id="CHEBI:58349"/>
        <dbReference type="EC" id="1.1.1.267"/>
    </reaction>
    <physiologicalReaction direction="right-to-left" evidence="4">
        <dbReference type="Rhea" id="RHEA:13719"/>
    </physiologicalReaction>
</comment>
<comment type="cofactor">
    <cofactor evidence="1">
        <name>Mg(2+)</name>
        <dbReference type="ChEBI" id="CHEBI:18420"/>
    </cofactor>
    <cofactor evidence="1">
        <name>Mn(2+)</name>
        <dbReference type="ChEBI" id="CHEBI:29035"/>
    </cofactor>
</comment>
<comment type="activity regulation">
    <text evidence="2">Inhibited by fosmidomycin.</text>
</comment>
<comment type="pathway">
    <text evidence="1 4">Isoprenoid biosynthesis; isopentenyl diphosphate biosynthesis via DXP pathway; isopentenyl diphosphate from 1-deoxy-D-xylulose 5-phosphate: step 1/6.</text>
</comment>
<comment type="similarity">
    <text evidence="1">Belongs to the DXR family.</text>
</comment>
<evidence type="ECO:0000255" key="1">
    <source>
        <dbReference type="HAMAP-Rule" id="MF_00183"/>
    </source>
</evidence>
<evidence type="ECO:0000269" key="2">
    <source>
    </source>
</evidence>
<evidence type="ECO:0000303" key="3">
    <source>
    </source>
</evidence>
<evidence type="ECO:0000305" key="4">
    <source>
    </source>
</evidence>
<protein>
    <recommendedName>
        <fullName evidence="1 3">1-deoxy-D-xylulose 5-phosphate reductoisomerase</fullName>
        <shortName evidence="1 3">DXP reductoisomerase</shortName>
        <ecNumber evidence="2">1.1.1.267</ecNumber>
    </recommendedName>
    <alternativeName>
        <fullName evidence="1">1-deoxyxylulose-5-phosphate reductoisomerase</fullName>
    </alternativeName>
    <alternativeName>
        <fullName evidence="1">2-C-methyl-D-erythritol 4-phosphate synthase</fullName>
    </alternativeName>
</protein>
<reference key="1">
    <citation type="journal article" date="2000" name="FEBS Lett.">
        <title>Functional involvement of a deoxy-D-xylulose 5-phosphate reductoisomerase gene harboring locus of Synechococcus leopoliensis in isoprenoid biosynthesis.</title>
        <authorList>
            <person name="Miller B.H."/>
            <person name="Heuser T."/>
            <person name="Zimmer W.L."/>
        </authorList>
    </citation>
    <scope>NUCLEOTIDE SEQUENCE [GENOMIC DNA]</scope>
    <scope>FUNCTION</scope>
    <scope>CATALYTIC ACTIVITY</scope>
    <scope>PATHWAY</scope>
    <scope>ACTIVITY REGULATION</scope>
</reference>
<reference key="2">
    <citation type="journal article" date="2007" name="Photosyn. Res.">
        <title>Complete nucleotide sequence of the freshwater unicellular cyanobacterium Synechococcus elongatus PCC 6301 chromosome: gene content and organization.</title>
        <authorList>
            <person name="Sugita C."/>
            <person name="Ogata K."/>
            <person name="Shikata M."/>
            <person name="Jikuya H."/>
            <person name="Takano J."/>
            <person name="Furumichi M."/>
            <person name="Kanehisa M."/>
            <person name="Omata T."/>
            <person name="Sugiura M."/>
            <person name="Sugita M."/>
        </authorList>
    </citation>
    <scope>NUCLEOTIDE SEQUENCE [LARGE SCALE GENOMIC DNA]</scope>
    <source>
        <strain>ATCC 27144 / PCC 6301 / SAUG 1402/1</strain>
    </source>
</reference>
<keyword id="KW-0414">Isoprene biosynthesis</keyword>
<keyword id="KW-0464">Manganese</keyword>
<keyword id="KW-0479">Metal-binding</keyword>
<keyword id="KW-0521">NADP</keyword>
<keyword id="KW-0560">Oxidoreductase</keyword>